<keyword id="KW-0067">ATP-binding</keyword>
<keyword id="KW-0963">Cytoplasm</keyword>
<keyword id="KW-0418">Kinase</keyword>
<keyword id="KW-0547">Nucleotide-binding</keyword>
<keyword id="KW-0665">Pyrimidine biosynthesis</keyword>
<keyword id="KW-0808">Transferase</keyword>
<reference key="1">
    <citation type="submission" date="2007-09" db="EMBL/GenBank/DDBJ databases">
        <title>Complete genome sequence of Rickettsia canadensis.</title>
        <authorList>
            <person name="Madan A."/>
            <person name="Fahey J."/>
            <person name="Helton E."/>
            <person name="Ketteman M."/>
            <person name="Madan A."/>
            <person name="Rodrigues S."/>
            <person name="Sanchez A."/>
            <person name="Whiting M."/>
            <person name="Dasch G."/>
            <person name="Eremeeva M."/>
        </authorList>
    </citation>
    <scope>NUCLEOTIDE SEQUENCE [LARGE SCALE GENOMIC DNA]</scope>
    <source>
        <strain>McKiel</strain>
    </source>
</reference>
<accession>A8EXM4</accession>
<organism>
    <name type="scientific">Rickettsia canadensis (strain McKiel)</name>
    <dbReference type="NCBI Taxonomy" id="293613"/>
    <lineage>
        <taxon>Bacteria</taxon>
        <taxon>Pseudomonadati</taxon>
        <taxon>Pseudomonadota</taxon>
        <taxon>Alphaproteobacteria</taxon>
        <taxon>Rickettsiales</taxon>
        <taxon>Rickettsiaceae</taxon>
        <taxon>Rickettsieae</taxon>
        <taxon>Rickettsia</taxon>
        <taxon>belli group</taxon>
    </lineage>
</organism>
<name>PYRH_RICCK</name>
<dbReference type="EC" id="2.7.4.22" evidence="1"/>
<dbReference type="EMBL" id="CP000409">
    <property type="protein sequence ID" value="ABV73107.1"/>
    <property type="molecule type" value="Genomic_DNA"/>
</dbReference>
<dbReference type="RefSeq" id="WP_012148308.1">
    <property type="nucleotide sequence ID" value="NC_009879.1"/>
</dbReference>
<dbReference type="SMR" id="A8EXM4"/>
<dbReference type="STRING" id="293613.A1E_00795"/>
<dbReference type="KEGG" id="rcm:A1E_00795"/>
<dbReference type="eggNOG" id="COG0528">
    <property type="taxonomic scope" value="Bacteria"/>
</dbReference>
<dbReference type="HOGENOM" id="CLU_033861_0_0_5"/>
<dbReference type="UniPathway" id="UPA00159">
    <property type="reaction ID" value="UER00275"/>
</dbReference>
<dbReference type="Proteomes" id="UP000007056">
    <property type="component" value="Chromosome"/>
</dbReference>
<dbReference type="GO" id="GO:0005737">
    <property type="term" value="C:cytoplasm"/>
    <property type="evidence" value="ECO:0007669"/>
    <property type="project" value="UniProtKB-SubCell"/>
</dbReference>
<dbReference type="GO" id="GO:0005524">
    <property type="term" value="F:ATP binding"/>
    <property type="evidence" value="ECO:0007669"/>
    <property type="project" value="UniProtKB-KW"/>
</dbReference>
<dbReference type="GO" id="GO:0033862">
    <property type="term" value="F:UMP kinase activity"/>
    <property type="evidence" value="ECO:0007669"/>
    <property type="project" value="UniProtKB-EC"/>
</dbReference>
<dbReference type="GO" id="GO:0044210">
    <property type="term" value="P:'de novo' CTP biosynthetic process"/>
    <property type="evidence" value="ECO:0007669"/>
    <property type="project" value="UniProtKB-UniRule"/>
</dbReference>
<dbReference type="GO" id="GO:0006225">
    <property type="term" value="P:UDP biosynthetic process"/>
    <property type="evidence" value="ECO:0007669"/>
    <property type="project" value="TreeGrafter"/>
</dbReference>
<dbReference type="CDD" id="cd04254">
    <property type="entry name" value="AAK_UMPK-PyrH-Ec"/>
    <property type="match status" value="1"/>
</dbReference>
<dbReference type="FunFam" id="3.40.1160.10:FF:000001">
    <property type="entry name" value="Uridylate kinase"/>
    <property type="match status" value="1"/>
</dbReference>
<dbReference type="Gene3D" id="3.40.1160.10">
    <property type="entry name" value="Acetylglutamate kinase-like"/>
    <property type="match status" value="1"/>
</dbReference>
<dbReference type="HAMAP" id="MF_01220_B">
    <property type="entry name" value="PyrH_B"/>
    <property type="match status" value="1"/>
</dbReference>
<dbReference type="InterPro" id="IPR036393">
    <property type="entry name" value="AceGlu_kinase-like_sf"/>
</dbReference>
<dbReference type="InterPro" id="IPR001048">
    <property type="entry name" value="Asp/Glu/Uridylate_kinase"/>
</dbReference>
<dbReference type="InterPro" id="IPR011817">
    <property type="entry name" value="Uridylate_kinase"/>
</dbReference>
<dbReference type="InterPro" id="IPR015963">
    <property type="entry name" value="Uridylate_kinase_bac"/>
</dbReference>
<dbReference type="NCBIfam" id="TIGR02075">
    <property type="entry name" value="pyrH_bact"/>
    <property type="match status" value="1"/>
</dbReference>
<dbReference type="PANTHER" id="PTHR42833">
    <property type="entry name" value="URIDYLATE KINASE"/>
    <property type="match status" value="1"/>
</dbReference>
<dbReference type="PANTHER" id="PTHR42833:SF4">
    <property type="entry name" value="URIDYLATE KINASE PUMPKIN, CHLOROPLASTIC"/>
    <property type="match status" value="1"/>
</dbReference>
<dbReference type="Pfam" id="PF00696">
    <property type="entry name" value="AA_kinase"/>
    <property type="match status" value="1"/>
</dbReference>
<dbReference type="PIRSF" id="PIRSF005650">
    <property type="entry name" value="Uridylate_kin"/>
    <property type="match status" value="1"/>
</dbReference>
<dbReference type="SUPFAM" id="SSF53633">
    <property type="entry name" value="Carbamate kinase-like"/>
    <property type="match status" value="1"/>
</dbReference>
<evidence type="ECO:0000255" key="1">
    <source>
        <dbReference type="HAMAP-Rule" id="MF_01220"/>
    </source>
</evidence>
<gene>
    <name evidence="1" type="primary">pyrH</name>
    <name type="ordered locus">A1E_00795</name>
</gene>
<feature type="chain" id="PRO_1000053999" description="Uridylate kinase">
    <location>
        <begin position="1"/>
        <end position="242"/>
    </location>
</feature>
<feature type="binding site" evidence="1">
    <location>
        <begin position="16"/>
        <end position="19"/>
    </location>
    <ligand>
        <name>ATP</name>
        <dbReference type="ChEBI" id="CHEBI:30616"/>
    </ligand>
</feature>
<feature type="binding site" evidence="1">
    <location>
        <position position="58"/>
    </location>
    <ligand>
        <name>UMP</name>
        <dbReference type="ChEBI" id="CHEBI:57865"/>
    </ligand>
</feature>
<feature type="binding site" evidence="1">
    <location>
        <position position="59"/>
    </location>
    <ligand>
        <name>ATP</name>
        <dbReference type="ChEBI" id="CHEBI:30616"/>
    </ligand>
</feature>
<feature type="binding site" evidence="1">
    <location>
        <position position="63"/>
    </location>
    <ligand>
        <name>ATP</name>
        <dbReference type="ChEBI" id="CHEBI:30616"/>
    </ligand>
</feature>
<feature type="binding site" evidence="1">
    <location>
        <position position="78"/>
    </location>
    <ligand>
        <name>UMP</name>
        <dbReference type="ChEBI" id="CHEBI:57865"/>
    </ligand>
</feature>
<feature type="binding site" evidence="1">
    <location>
        <begin position="139"/>
        <end position="146"/>
    </location>
    <ligand>
        <name>UMP</name>
        <dbReference type="ChEBI" id="CHEBI:57865"/>
    </ligand>
</feature>
<feature type="binding site" evidence="1">
    <location>
        <position position="166"/>
    </location>
    <ligand>
        <name>ATP</name>
        <dbReference type="ChEBI" id="CHEBI:30616"/>
    </ligand>
</feature>
<feature type="binding site" evidence="1">
    <location>
        <position position="167"/>
    </location>
    <ligand>
        <name>ATP</name>
        <dbReference type="ChEBI" id="CHEBI:30616"/>
    </ligand>
</feature>
<feature type="binding site" evidence="1">
    <location>
        <position position="172"/>
    </location>
    <ligand>
        <name>ATP</name>
        <dbReference type="ChEBI" id="CHEBI:30616"/>
    </ligand>
</feature>
<feature type="binding site" evidence="1">
    <location>
        <position position="175"/>
    </location>
    <ligand>
        <name>ATP</name>
        <dbReference type="ChEBI" id="CHEBI:30616"/>
    </ligand>
</feature>
<sequence length="242" mass="26678">MTSDINALKYKKVLLKVSGEALMGDKQFGHEYDVIKKIAGDIKEVIDLGVEVTIVVGGGNIYRGINAALVGMDRASADYIGMLATVINALTLQNVMESLNIYTRVLSAIPMMSVCEPYIRRKAKRHMEKKRVVIFAGGTGNPFCTTDSAAVLRAIEMNCDILLKATQVDGVYDSDPKKNPNAKKYFTISYKDVITNNLQVMDMAAIAVAQENKLPIRIFSIKDQGNFAKVIQDKGKYTTIEE</sequence>
<comment type="function">
    <text evidence="1">Catalyzes the reversible phosphorylation of UMP to UDP.</text>
</comment>
<comment type="catalytic activity">
    <reaction evidence="1">
        <text>UMP + ATP = UDP + ADP</text>
        <dbReference type="Rhea" id="RHEA:24400"/>
        <dbReference type="ChEBI" id="CHEBI:30616"/>
        <dbReference type="ChEBI" id="CHEBI:57865"/>
        <dbReference type="ChEBI" id="CHEBI:58223"/>
        <dbReference type="ChEBI" id="CHEBI:456216"/>
        <dbReference type="EC" id="2.7.4.22"/>
    </reaction>
</comment>
<comment type="activity regulation">
    <text evidence="1">Inhibited by UTP.</text>
</comment>
<comment type="pathway">
    <text evidence="1">Pyrimidine metabolism; CTP biosynthesis via de novo pathway; UDP from UMP (UMPK route): step 1/1.</text>
</comment>
<comment type="subunit">
    <text evidence="1">Homohexamer.</text>
</comment>
<comment type="subcellular location">
    <subcellularLocation>
        <location evidence="1">Cytoplasm</location>
    </subcellularLocation>
</comment>
<comment type="similarity">
    <text evidence="1">Belongs to the UMP kinase family.</text>
</comment>
<proteinExistence type="inferred from homology"/>
<protein>
    <recommendedName>
        <fullName evidence="1">Uridylate kinase</fullName>
        <shortName evidence="1">UK</shortName>
        <ecNumber evidence="1">2.7.4.22</ecNumber>
    </recommendedName>
    <alternativeName>
        <fullName evidence="1">Uridine monophosphate kinase</fullName>
        <shortName evidence="1">UMP kinase</shortName>
        <shortName evidence="1">UMPK</shortName>
    </alternativeName>
</protein>